<feature type="chain" id="PRO_1000204840" description="Phenylalanine--tRNA ligase alpha subunit">
    <location>
        <begin position="1"/>
        <end position="499"/>
    </location>
</feature>
<feature type="binding site" evidence="1">
    <location>
        <position position="342"/>
    </location>
    <ligand>
        <name>L-phenylalanine</name>
        <dbReference type="ChEBI" id="CHEBI:58095"/>
    </ligand>
</feature>
<feature type="binding site" evidence="1">
    <location>
        <begin position="381"/>
        <end position="383"/>
    </location>
    <ligand>
        <name>L-phenylalanine</name>
        <dbReference type="ChEBI" id="CHEBI:58095"/>
    </ligand>
</feature>
<feature type="binding site" evidence="1">
    <location>
        <position position="422"/>
    </location>
    <ligand>
        <name>L-phenylalanine</name>
        <dbReference type="ChEBI" id="CHEBI:58095"/>
    </ligand>
</feature>
<feature type="binding site" evidence="1">
    <location>
        <position position="424"/>
    </location>
    <ligand>
        <name>Mg(2+)</name>
        <dbReference type="ChEBI" id="CHEBI:18420"/>
        <note>shared with beta subunit</note>
    </ligand>
</feature>
<feature type="binding site" evidence="1">
    <location>
        <position position="447"/>
    </location>
    <ligand>
        <name>L-phenylalanine</name>
        <dbReference type="ChEBI" id="CHEBI:58095"/>
    </ligand>
</feature>
<name>SYFA_THEGJ</name>
<accession>C5A5Y9</accession>
<evidence type="ECO:0000255" key="1">
    <source>
        <dbReference type="HAMAP-Rule" id="MF_00282"/>
    </source>
</evidence>
<gene>
    <name evidence="1" type="primary">pheS</name>
    <name type="ordered locus">TGAM_1149</name>
</gene>
<protein>
    <recommendedName>
        <fullName evidence="1">Phenylalanine--tRNA ligase alpha subunit</fullName>
        <ecNumber evidence="1">6.1.1.20</ecNumber>
    </recommendedName>
    <alternativeName>
        <fullName evidence="1">Phenylalanyl-tRNA synthetase alpha subunit</fullName>
        <shortName evidence="1">PheRS</shortName>
    </alternativeName>
</protein>
<sequence>MELSYQEKLTLIKLNELKRAKFEELVKATGLEQVAVMRAVLGLQAKGLAKLHERSEKVVKLTETGKKYAEIGLPEWRALKLLRERGKVTLDDLREVLSDDELKPIVGLLRKEGWASVRKEDGKLILEITEKGLEAEERPIDRALKLLAEKNVVPVKEIEKLIPVKELKRRKIGEEETVTERTVEITPAGEELAPKVELKREVSVLTPELIKSGKWREVEFRRFDIKAPVRRIYPGKKQPYRAFLDKIRRRLIEMGFIEMTVDSLIETQFWNFDALFQPQNHPAREWTDTYQLKYPKSGFLPEEELVERVKTAHERGLAGSRGWGYVWSPERAMLLMPRAHGTALSGRQLAKGVEIPGKYFTIQRVFRPDVLDRTHLIEFNQIDGFVVGEELNFRHLLGILKRFAVEIAGAKKVKFLPDYYPFTEPSVQMSAYHPELGWVEFGGAGIFREEMTKALGIEVPVIAWGIGIDRLAMFKLGIDDIRYLFSYDLRWLREAKLVW</sequence>
<reference key="1">
    <citation type="journal article" date="2007" name="Genome Biol.">
        <title>Genome analysis and genome-wide proteomics of Thermococcus gammatolerans, the most radioresistant organism known amongst the Archaea.</title>
        <authorList>
            <person name="Zivanovic Y."/>
            <person name="Armengaud J."/>
            <person name="Lagorce A."/>
            <person name="Leplat C."/>
            <person name="Guerin P."/>
            <person name="Dutertre M."/>
            <person name="Anthouard V."/>
            <person name="Forterre P."/>
            <person name="Wincker P."/>
            <person name="Confalonieri F."/>
        </authorList>
    </citation>
    <scope>NUCLEOTIDE SEQUENCE [LARGE SCALE GENOMIC DNA]</scope>
    <source>
        <strain>DSM 15229 / JCM 11827 / EJ3</strain>
    </source>
</reference>
<keyword id="KW-0030">Aminoacyl-tRNA synthetase</keyword>
<keyword id="KW-0067">ATP-binding</keyword>
<keyword id="KW-0963">Cytoplasm</keyword>
<keyword id="KW-0436">Ligase</keyword>
<keyword id="KW-0460">Magnesium</keyword>
<keyword id="KW-0479">Metal-binding</keyword>
<keyword id="KW-0547">Nucleotide-binding</keyword>
<keyword id="KW-0648">Protein biosynthesis</keyword>
<keyword id="KW-1185">Reference proteome</keyword>
<comment type="catalytic activity">
    <reaction evidence="1">
        <text>tRNA(Phe) + L-phenylalanine + ATP = L-phenylalanyl-tRNA(Phe) + AMP + diphosphate + H(+)</text>
        <dbReference type="Rhea" id="RHEA:19413"/>
        <dbReference type="Rhea" id="RHEA-COMP:9668"/>
        <dbReference type="Rhea" id="RHEA-COMP:9699"/>
        <dbReference type="ChEBI" id="CHEBI:15378"/>
        <dbReference type="ChEBI" id="CHEBI:30616"/>
        <dbReference type="ChEBI" id="CHEBI:33019"/>
        <dbReference type="ChEBI" id="CHEBI:58095"/>
        <dbReference type="ChEBI" id="CHEBI:78442"/>
        <dbReference type="ChEBI" id="CHEBI:78531"/>
        <dbReference type="ChEBI" id="CHEBI:456215"/>
        <dbReference type="EC" id="6.1.1.20"/>
    </reaction>
</comment>
<comment type="cofactor">
    <cofactor evidence="1">
        <name>Mg(2+)</name>
        <dbReference type="ChEBI" id="CHEBI:18420"/>
    </cofactor>
    <text evidence="1">Binds 2 magnesium ions per tetramer.</text>
</comment>
<comment type="subunit">
    <text evidence="1">Tetramer of two alpha and two beta subunits.</text>
</comment>
<comment type="subcellular location">
    <subcellularLocation>
        <location evidence="1">Cytoplasm</location>
    </subcellularLocation>
</comment>
<comment type="similarity">
    <text evidence="1">Belongs to the class-II aminoacyl-tRNA synthetase family. Phe-tRNA synthetase alpha subunit type 2 subfamily.</text>
</comment>
<organism>
    <name type="scientific">Thermococcus gammatolerans (strain DSM 15229 / JCM 11827 / EJ3)</name>
    <dbReference type="NCBI Taxonomy" id="593117"/>
    <lineage>
        <taxon>Archaea</taxon>
        <taxon>Methanobacteriati</taxon>
        <taxon>Methanobacteriota</taxon>
        <taxon>Thermococci</taxon>
        <taxon>Thermococcales</taxon>
        <taxon>Thermococcaceae</taxon>
        <taxon>Thermococcus</taxon>
    </lineage>
</organism>
<dbReference type="EC" id="6.1.1.20" evidence="1"/>
<dbReference type="EMBL" id="CP001398">
    <property type="protein sequence ID" value="ACS33651.1"/>
    <property type="molecule type" value="Genomic_DNA"/>
</dbReference>
<dbReference type="RefSeq" id="WP_015858764.1">
    <property type="nucleotide sequence ID" value="NC_012804.1"/>
</dbReference>
<dbReference type="SMR" id="C5A5Y9"/>
<dbReference type="STRING" id="593117.TGAM_1149"/>
<dbReference type="PaxDb" id="593117-TGAM_1149"/>
<dbReference type="GeneID" id="7988536"/>
<dbReference type="KEGG" id="tga:TGAM_1149"/>
<dbReference type="PATRIC" id="fig|593117.10.peg.1149"/>
<dbReference type="eggNOG" id="arCOG00410">
    <property type="taxonomic scope" value="Archaea"/>
</dbReference>
<dbReference type="HOGENOM" id="CLU_025086_2_2_2"/>
<dbReference type="OrthoDB" id="372178at2157"/>
<dbReference type="Proteomes" id="UP000001488">
    <property type="component" value="Chromosome"/>
</dbReference>
<dbReference type="GO" id="GO:0005737">
    <property type="term" value="C:cytoplasm"/>
    <property type="evidence" value="ECO:0007669"/>
    <property type="project" value="UniProtKB-SubCell"/>
</dbReference>
<dbReference type="GO" id="GO:0005524">
    <property type="term" value="F:ATP binding"/>
    <property type="evidence" value="ECO:0007669"/>
    <property type="project" value="UniProtKB-UniRule"/>
</dbReference>
<dbReference type="GO" id="GO:0000287">
    <property type="term" value="F:magnesium ion binding"/>
    <property type="evidence" value="ECO:0007669"/>
    <property type="project" value="UniProtKB-UniRule"/>
</dbReference>
<dbReference type="GO" id="GO:0004826">
    <property type="term" value="F:phenylalanine-tRNA ligase activity"/>
    <property type="evidence" value="ECO:0007669"/>
    <property type="project" value="UniProtKB-UniRule"/>
</dbReference>
<dbReference type="GO" id="GO:0000049">
    <property type="term" value="F:tRNA binding"/>
    <property type="evidence" value="ECO:0007669"/>
    <property type="project" value="InterPro"/>
</dbReference>
<dbReference type="GO" id="GO:0006432">
    <property type="term" value="P:phenylalanyl-tRNA aminoacylation"/>
    <property type="evidence" value="ECO:0007669"/>
    <property type="project" value="UniProtKB-UniRule"/>
</dbReference>
<dbReference type="CDD" id="cd00496">
    <property type="entry name" value="PheRS_alpha_core"/>
    <property type="match status" value="1"/>
</dbReference>
<dbReference type="FunFam" id="3.30.930.10:FF:000095">
    <property type="entry name" value="Phenylalanine--tRNA ligase alpha subunit"/>
    <property type="match status" value="1"/>
</dbReference>
<dbReference type="Gene3D" id="3.30.930.10">
    <property type="entry name" value="Bira Bifunctional Protein, Domain 2"/>
    <property type="match status" value="1"/>
</dbReference>
<dbReference type="Gene3D" id="1.10.10.10">
    <property type="entry name" value="Winged helix-like DNA-binding domain superfamily/Winged helix DNA-binding domain"/>
    <property type="match status" value="1"/>
</dbReference>
<dbReference type="HAMAP" id="MF_00282">
    <property type="entry name" value="Phe_tRNA_synth_alpha2"/>
    <property type="match status" value="1"/>
</dbReference>
<dbReference type="InterPro" id="IPR006195">
    <property type="entry name" value="aa-tRNA-synth_II"/>
</dbReference>
<dbReference type="InterPro" id="IPR045864">
    <property type="entry name" value="aa-tRNA-synth_II/BPL/LPL"/>
</dbReference>
<dbReference type="InterPro" id="IPR004529">
    <property type="entry name" value="Phe-tRNA-synth_IIc_asu"/>
</dbReference>
<dbReference type="InterPro" id="IPR022917">
    <property type="entry name" value="Phe_tRNA_ligase_alpha_bac/arc"/>
</dbReference>
<dbReference type="InterPro" id="IPR002319">
    <property type="entry name" value="Phenylalanyl-tRNA_Synthase"/>
</dbReference>
<dbReference type="InterPro" id="IPR036388">
    <property type="entry name" value="WH-like_DNA-bd_sf"/>
</dbReference>
<dbReference type="InterPro" id="IPR036390">
    <property type="entry name" value="WH_DNA-bd_sf"/>
</dbReference>
<dbReference type="NCBIfam" id="TIGR00468">
    <property type="entry name" value="pheS"/>
    <property type="match status" value="1"/>
</dbReference>
<dbReference type="NCBIfam" id="NF003210">
    <property type="entry name" value="PRK04172.1"/>
    <property type="match status" value="1"/>
</dbReference>
<dbReference type="PANTHER" id="PTHR11538:SF40">
    <property type="entry name" value="PHENYLALANINE--TRNA LIGASE ALPHA SUBUNIT"/>
    <property type="match status" value="1"/>
</dbReference>
<dbReference type="PANTHER" id="PTHR11538">
    <property type="entry name" value="PHENYLALANYL-TRNA SYNTHETASE"/>
    <property type="match status" value="1"/>
</dbReference>
<dbReference type="Pfam" id="PF01409">
    <property type="entry name" value="tRNA-synt_2d"/>
    <property type="match status" value="1"/>
</dbReference>
<dbReference type="SUPFAM" id="SSF55681">
    <property type="entry name" value="Class II aaRS and biotin synthetases"/>
    <property type="match status" value="1"/>
</dbReference>
<dbReference type="SUPFAM" id="SSF46785">
    <property type="entry name" value="Winged helix' DNA-binding domain"/>
    <property type="match status" value="2"/>
</dbReference>
<dbReference type="PROSITE" id="PS50862">
    <property type="entry name" value="AA_TRNA_LIGASE_II"/>
    <property type="match status" value="1"/>
</dbReference>
<proteinExistence type="inferred from homology"/>